<comment type="function">
    <text evidence="1">Involved in the gluconeogenesis. Catalyzes stereospecifically the conversion of dihydroxyacetone phosphate (DHAP) to D-glyceraldehyde-3-phosphate (G3P).</text>
</comment>
<comment type="catalytic activity">
    <reaction evidence="1">
        <text>D-glyceraldehyde 3-phosphate = dihydroxyacetone phosphate</text>
        <dbReference type="Rhea" id="RHEA:18585"/>
        <dbReference type="ChEBI" id="CHEBI:57642"/>
        <dbReference type="ChEBI" id="CHEBI:59776"/>
        <dbReference type="EC" id="5.3.1.1"/>
    </reaction>
</comment>
<comment type="pathway">
    <text evidence="1">Carbohydrate biosynthesis; gluconeogenesis.</text>
</comment>
<comment type="pathway">
    <text evidence="1">Carbohydrate degradation; glycolysis; D-glyceraldehyde 3-phosphate from glycerone phosphate: step 1/1.</text>
</comment>
<comment type="subunit">
    <text evidence="1">Homodimer.</text>
</comment>
<comment type="subcellular location">
    <subcellularLocation>
        <location evidence="1">Cytoplasm</location>
    </subcellularLocation>
</comment>
<comment type="similarity">
    <text evidence="1">Belongs to the triosephosphate isomerase family.</text>
</comment>
<feature type="chain" id="PRO_1000058117" description="Triosephosphate isomerase">
    <location>
        <begin position="1"/>
        <end position="256"/>
    </location>
</feature>
<feature type="active site" description="Electrophile" evidence="1">
    <location>
        <position position="99"/>
    </location>
</feature>
<feature type="active site" description="Proton acceptor" evidence="1">
    <location>
        <position position="171"/>
    </location>
</feature>
<feature type="binding site" evidence="1">
    <location>
        <begin position="12"/>
        <end position="14"/>
    </location>
    <ligand>
        <name>substrate</name>
    </ligand>
</feature>
<feature type="binding site" evidence="1">
    <location>
        <position position="177"/>
    </location>
    <ligand>
        <name>substrate</name>
    </ligand>
</feature>
<feature type="binding site" evidence="1">
    <location>
        <position position="217"/>
    </location>
    <ligand>
        <name>substrate</name>
    </ligand>
</feature>
<feature type="binding site" evidence="1">
    <location>
        <begin position="238"/>
        <end position="239"/>
    </location>
    <ligand>
        <name>substrate</name>
    </ligand>
</feature>
<keyword id="KW-0963">Cytoplasm</keyword>
<keyword id="KW-0312">Gluconeogenesis</keyword>
<keyword id="KW-0324">Glycolysis</keyword>
<keyword id="KW-0413">Isomerase</keyword>
<keyword id="KW-1185">Reference proteome</keyword>
<gene>
    <name evidence="1" type="primary">tpiA</name>
    <name type="ordered locus">Rxyl_2003</name>
</gene>
<proteinExistence type="inferred from homology"/>
<organism>
    <name type="scientific">Rubrobacter xylanophilus (strain DSM 9941 / JCM 11954 / NBRC 16129 / PRD-1)</name>
    <dbReference type="NCBI Taxonomy" id="266117"/>
    <lineage>
        <taxon>Bacteria</taxon>
        <taxon>Bacillati</taxon>
        <taxon>Actinomycetota</taxon>
        <taxon>Rubrobacteria</taxon>
        <taxon>Rubrobacterales</taxon>
        <taxon>Rubrobacteraceae</taxon>
        <taxon>Rubrobacter</taxon>
    </lineage>
</organism>
<reference key="1">
    <citation type="submission" date="2006-06" db="EMBL/GenBank/DDBJ databases">
        <title>Complete sequence of Rubrobacter xylanophilus DSM 9941.</title>
        <authorList>
            <consortium name="US DOE Joint Genome Institute"/>
            <person name="Copeland A."/>
            <person name="Lucas S."/>
            <person name="Lapidus A."/>
            <person name="Barry K."/>
            <person name="Detter J.C."/>
            <person name="Glavina del Rio T."/>
            <person name="Hammon N."/>
            <person name="Israni S."/>
            <person name="Dalin E."/>
            <person name="Tice H."/>
            <person name="Pitluck S."/>
            <person name="Munk A.C."/>
            <person name="Brettin T."/>
            <person name="Bruce D."/>
            <person name="Han C."/>
            <person name="Tapia R."/>
            <person name="Gilna P."/>
            <person name="Schmutz J."/>
            <person name="Larimer F."/>
            <person name="Land M."/>
            <person name="Hauser L."/>
            <person name="Kyrpides N."/>
            <person name="Lykidis A."/>
            <person name="da Costa M.S."/>
            <person name="Rainey F.A."/>
            <person name="Empadinhas N."/>
            <person name="Jolivet E."/>
            <person name="Battista J.R."/>
            <person name="Richardson P."/>
        </authorList>
    </citation>
    <scope>NUCLEOTIDE SEQUENCE [LARGE SCALE GENOMIC DNA]</scope>
    <source>
        <strain>DSM 9941 / JCM 11954 / NBRC 16129 / PRD-1</strain>
    </source>
</reference>
<protein>
    <recommendedName>
        <fullName evidence="1">Triosephosphate isomerase</fullName>
        <shortName evidence="1">TIM</shortName>
        <shortName evidence="1">TPI</shortName>
        <ecNumber evidence="1">5.3.1.1</ecNumber>
    </recommendedName>
    <alternativeName>
        <fullName evidence="1">Triose-phosphate isomerase</fullName>
    </alternativeName>
</protein>
<sequence>MAGERRPLMAANWKMNKTVREAQDYMAALLPRVADLAGEVDVAVFAPFTCLSEVARMAEGSGVLAGAQNFFYEDSGAYTGEVSAPMLLDVGARASIVGHSERRELFCETDESVARKARRAVEAGLLPVVCVGETEEERDAGRMWEKVSGQVRAVVEGLGDASGGRVVFAYEPIWAIGTGKTASPEDAQDAIGRIRGLLRELRGEGFAEEARLLYGGSIKPENISEIMAQKDVDGGLVGGASLEVGSFLQLVEAARG</sequence>
<accession>Q1AUH8</accession>
<dbReference type="EC" id="5.3.1.1" evidence="1"/>
<dbReference type="EMBL" id="CP000386">
    <property type="protein sequence ID" value="ABG04950.1"/>
    <property type="molecule type" value="Genomic_DNA"/>
</dbReference>
<dbReference type="RefSeq" id="WP_011564965.1">
    <property type="nucleotide sequence ID" value="NC_008148.1"/>
</dbReference>
<dbReference type="SMR" id="Q1AUH8"/>
<dbReference type="STRING" id="266117.Rxyl_2003"/>
<dbReference type="KEGG" id="rxy:Rxyl_2003"/>
<dbReference type="eggNOG" id="COG0149">
    <property type="taxonomic scope" value="Bacteria"/>
</dbReference>
<dbReference type="HOGENOM" id="CLU_024251_2_3_11"/>
<dbReference type="OrthoDB" id="9809429at2"/>
<dbReference type="PhylomeDB" id="Q1AUH8"/>
<dbReference type="UniPathway" id="UPA00109">
    <property type="reaction ID" value="UER00189"/>
</dbReference>
<dbReference type="UniPathway" id="UPA00138"/>
<dbReference type="Proteomes" id="UP000006637">
    <property type="component" value="Chromosome"/>
</dbReference>
<dbReference type="GO" id="GO:0005829">
    <property type="term" value="C:cytosol"/>
    <property type="evidence" value="ECO:0007669"/>
    <property type="project" value="TreeGrafter"/>
</dbReference>
<dbReference type="GO" id="GO:0004807">
    <property type="term" value="F:triose-phosphate isomerase activity"/>
    <property type="evidence" value="ECO:0007669"/>
    <property type="project" value="UniProtKB-UniRule"/>
</dbReference>
<dbReference type="GO" id="GO:0006094">
    <property type="term" value="P:gluconeogenesis"/>
    <property type="evidence" value="ECO:0007669"/>
    <property type="project" value="UniProtKB-UniRule"/>
</dbReference>
<dbReference type="GO" id="GO:0046166">
    <property type="term" value="P:glyceraldehyde-3-phosphate biosynthetic process"/>
    <property type="evidence" value="ECO:0007669"/>
    <property type="project" value="TreeGrafter"/>
</dbReference>
<dbReference type="GO" id="GO:0019563">
    <property type="term" value="P:glycerol catabolic process"/>
    <property type="evidence" value="ECO:0007669"/>
    <property type="project" value="TreeGrafter"/>
</dbReference>
<dbReference type="GO" id="GO:0006096">
    <property type="term" value="P:glycolytic process"/>
    <property type="evidence" value="ECO:0007669"/>
    <property type="project" value="UniProtKB-UniRule"/>
</dbReference>
<dbReference type="CDD" id="cd00311">
    <property type="entry name" value="TIM"/>
    <property type="match status" value="1"/>
</dbReference>
<dbReference type="FunFam" id="3.20.20.70:FF:000016">
    <property type="entry name" value="Triosephosphate isomerase"/>
    <property type="match status" value="1"/>
</dbReference>
<dbReference type="Gene3D" id="3.20.20.70">
    <property type="entry name" value="Aldolase class I"/>
    <property type="match status" value="1"/>
</dbReference>
<dbReference type="HAMAP" id="MF_00147_B">
    <property type="entry name" value="TIM_B"/>
    <property type="match status" value="1"/>
</dbReference>
<dbReference type="InterPro" id="IPR013785">
    <property type="entry name" value="Aldolase_TIM"/>
</dbReference>
<dbReference type="InterPro" id="IPR035990">
    <property type="entry name" value="TIM_sf"/>
</dbReference>
<dbReference type="InterPro" id="IPR022896">
    <property type="entry name" value="TrioseP_Isoase_bac/euk"/>
</dbReference>
<dbReference type="InterPro" id="IPR000652">
    <property type="entry name" value="Triosephosphate_isomerase"/>
</dbReference>
<dbReference type="InterPro" id="IPR020861">
    <property type="entry name" value="Triosephosphate_isomerase_AS"/>
</dbReference>
<dbReference type="NCBIfam" id="TIGR00419">
    <property type="entry name" value="tim"/>
    <property type="match status" value="1"/>
</dbReference>
<dbReference type="PANTHER" id="PTHR21139">
    <property type="entry name" value="TRIOSEPHOSPHATE ISOMERASE"/>
    <property type="match status" value="1"/>
</dbReference>
<dbReference type="PANTHER" id="PTHR21139:SF42">
    <property type="entry name" value="TRIOSEPHOSPHATE ISOMERASE"/>
    <property type="match status" value="1"/>
</dbReference>
<dbReference type="Pfam" id="PF00121">
    <property type="entry name" value="TIM"/>
    <property type="match status" value="1"/>
</dbReference>
<dbReference type="SUPFAM" id="SSF51351">
    <property type="entry name" value="Triosephosphate isomerase (TIM)"/>
    <property type="match status" value="1"/>
</dbReference>
<dbReference type="PROSITE" id="PS00171">
    <property type="entry name" value="TIM_1"/>
    <property type="match status" value="1"/>
</dbReference>
<dbReference type="PROSITE" id="PS51440">
    <property type="entry name" value="TIM_2"/>
    <property type="match status" value="1"/>
</dbReference>
<evidence type="ECO:0000255" key="1">
    <source>
        <dbReference type="HAMAP-Rule" id="MF_00147"/>
    </source>
</evidence>
<name>TPIS_RUBXD</name>